<name>EZRA_STRP7</name>
<accession>C1C6F1</accession>
<proteinExistence type="inferred from homology"/>
<feature type="chain" id="PRO_1000148072" description="Septation ring formation regulator EzrA">
    <location>
        <begin position="1"/>
        <end position="575"/>
    </location>
</feature>
<feature type="topological domain" description="Extracellular" evidence="1">
    <location>
        <begin position="1"/>
        <end position="8"/>
    </location>
</feature>
<feature type="transmembrane region" description="Helical" evidence="1">
    <location>
        <begin position="9"/>
        <end position="27"/>
    </location>
</feature>
<feature type="topological domain" description="Cytoplasmic" evidence="1">
    <location>
        <begin position="28"/>
        <end position="575"/>
    </location>
</feature>
<feature type="coiled-coil region" evidence="1">
    <location>
        <begin position="105"/>
        <end position="191"/>
    </location>
</feature>
<feature type="coiled-coil region" evidence="1">
    <location>
        <begin position="265"/>
        <end position="301"/>
    </location>
</feature>
<feature type="coiled-coil region" evidence="1">
    <location>
        <begin position="354"/>
        <end position="416"/>
    </location>
</feature>
<feature type="coiled-coil region" evidence="1">
    <location>
        <begin position="456"/>
        <end position="526"/>
    </location>
</feature>
<reference key="1">
    <citation type="journal article" date="2010" name="Genome Biol.">
        <title>Structure and dynamics of the pan-genome of Streptococcus pneumoniae and closely related species.</title>
        <authorList>
            <person name="Donati C."/>
            <person name="Hiller N.L."/>
            <person name="Tettelin H."/>
            <person name="Muzzi A."/>
            <person name="Croucher N.J."/>
            <person name="Angiuoli S.V."/>
            <person name="Oggioni M."/>
            <person name="Dunning Hotopp J.C."/>
            <person name="Hu F.Z."/>
            <person name="Riley D.R."/>
            <person name="Covacci A."/>
            <person name="Mitchell T.J."/>
            <person name="Bentley S.D."/>
            <person name="Kilian M."/>
            <person name="Ehrlich G.D."/>
            <person name="Rappuoli R."/>
            <person name="Moxon E.R."/>
            <person name="Masignani V."/>
        </authorList>
    </citation>
    <scope>NUCLEOTIDE SEQUENCE [LARGE SCALE GENOMIC DNA]</scope>
    <source>
        <strain>70585</strain>
    </source>
</reference>
<dbReference type="EMBL" id="CP000918">
    <property type="protein sequence ID" value="ACO17426.1"/>
    <property type="molecule type" value="Genomic_DNA"/>
</dbReference>
<dbReference type="RefSeq" id="WP_000064821.1">
    <property type="nucleotide sequence ID" value="NC_012468.1"/>
</dbReference>
<dbReference type="SMR" id="C1C6F1"/>
<dbReference type="KEGG" id="snm:SP70585_0852"/>
<dbReference type="HOGENOM" id="CLU_034079_2_0_9"/>
<dbReference type="Proteomes" id="UP000002211">
    <property type="component" value="Chromosome"/>
</dbReference>
<dbReference type="GO" id="GO:0005886">
    <property type="term" value="C:plasma membrane"/>
    <property type="evidence" value="ECO:0007669"/>
    <property type="project" value="UniProtKB-SubCell"/>
</dbReference>
<dbReference type="GO" id="GO:0005940">
    <property type="term" value="C:septin ring"/>
    <property type="evidence" value="ECO:0007669"/>
    <property type="project" value="InterPro"/>
</dbReference>
<dbReference type="GO" id="GO:0000917">
    <property type="term" value="P:division septum assembly"/>
    <property type="evidence" value="ECO:0007669"/>
    <property type="project" value="UniProtKB-KW"/>
</dbReference>
<dbReference type="GO" id="GO:0000921">
    <property type="term" value="P:septin ring assembly"/>
    <property type="evidence" value="ECO:0007669"/>
    <property type="project" value="InterPro"/>
</dbReference>
<dbReference type="HAMAP" id="MF_00728">
    <property type="entry name" value="EzrA"/>
    <property type="match status" value="1"/>
</dbReference>
<dbReference type="InterPro" id="IPR010379">
    <property type="entry name" value="EzrA"/>
</dbReference>
<dbReference type="NCBIfam" id="NF003410">
    <property type="entry name" value="PRK04778.1-4"/>
    <property type="match status" value="1"/>
</dbReference>
<dbReference type="Pfam" id="PF06160">
    <property type="entry name" value="EzrA"/>
    <property type="match status" value="1"/>
</dbReference>
<evidence type="ECO:0000255" key="1">
    <source>
        <dbReference type="HAMAP-Rule" id="MF_00728"/>
    </source>
</evidence>
<gene>
    <name evidence="1" type="primary">ezrA</name>
    <name type="ordered locus">SP70585_0852</name>
</gene>
<sequence length="575" mass="66520">MSNGQLIYLMVAIAVILVLAYVVAIFLRKRNEGRLEALEERKEELYNLPVNDEVEAVKNMHLIGQSQVAFREWNQKWVDLSLNSFADIENNLFEAEGYNHSFRFLKASHQIDQIESQITLIEEDIAAIRNALADLEKQESKNSGRVLHALDLFEELQHRVAENSEQYGQALDEIEKQLENIQSEFSQFVTLNSSGDPVEAAVILDNTENHILALSHIVDRVPALVTTLSTELPDQLQDLEAGYRKLIDANYHFVETDIEARFHLLYEAFKKNQENIRQLELDNAEYENGQAQEEINALYDIFTREIAAQKVVENLLATLPTYLQHMKENNTLLGEDIARLNKTYLLPETAASHVRRIQTELESFEAAIVEVTSNQEEPTQAYSVLEENLEDLQTQLKDIEDEQISVSERLTQIEKDDINARQKANVYVNRLHTIKRYMEKRNLPGIPQTFLKLFFTASNNTEDLMVELEQKMINIESVTRVLEIATNDMEALETETYNIVQYATLTEQLLQYSNRYRSFDERIQEAFNEALDIFEKEFDYHASFDKISQALEVAEPGVTNRFVTSYEKTRETIRF</sequence>
<keyword id="KW-0131">Cell cycle</keyword>
<keyword id="KW-0132">Cell division</keyword>
<keyword id="KW-1003">Cell membrane</keyword>
<keyword id="KW-0175">Coiled coil</keyword>
<keyword id="KW-0472">Membrane</keyword>
<keyword id="KW-0717">Septation</keyword>
<keyword id="KW-0812">Transmembrane</keyword>
<keyword id="KW-1133">Transmembrane helix</keyword>
<comment type="function">
    <text evidence="1">Negative regulator of FtsZ ring formation; modulates the frequency and position of FtsZ ring formation. Inhibits FtsZ ring formation at polar sites. Interacts either with FtsZ or with one of its binding partners to promote depolymerization.</text>
</comment>
<comment type="subcellular location">
    <subcellularLocation>
        <location evidence="1">Cell membrane</location>
        <topology evidence="1">Single-pass membrane protein</topology>
    </subcellularLocation>
    <text evidence="1">Colocalized with FtsZ to the nascent septal site.</text>
</comment>
<comment type="similarity">
    <text evidence="1">Belongs to the EzrA family.</text>
</comment>
<protein>
    <recommendedName>
        <fullName evidence="1">Septation ring formation regulator EzrA</fullName>
    </recommendedName>
</protein>
<organism>
    <name type="scientific">Streptococcus pneumoniae (strain 70585)</name>
    <dbReference type="NCBI Taxonomy" id="488221"/>
    <lineage>
        <taxon>Bacteria</taxon>
        <taxon>Bacillati</taxon>
        <taxon>Bacillota</taxon>
        <taxon>Bacilli</taxon>
        <taxon>Lactobacillales</taxon>
        <taxon>Streptococcaceae</taxon>
        <taxon>Streptococcus</taxon>
    </lineage>
</organism>